<protein>
    <recommendedName>
        <fullName>Uncharacterized protein MT0547</fullName>
    </recommendedName>
</protein>
<gene>
    <name type="ordered locus">MT0547</name>
</gene>
<feature type="chain" id="PRO_0000396088" description="Uncharacterized protein MT0547">
    <location>
        <begin position="1"/>
        <end position="202"/>
    </location>
</feature>
<feature type="cross-link" description="Isoglutamyl lysine isopeptide (Lys-Gln) (interchain with Q-Cter in protein Pup)" evidence="1">
    <location>
        <position position="136"/>
    </location>
</feature>
<reference key="1">
    <citation type="journal article" date="2002" name="J. Bacteriol.">
        <title>Whole-genome comparison of Mycobacterium tuberculosis clinical and laboratory strains.</title>
        <authorList>
            <person name="Fleischmann R.D."/>
            <person name="Alland D."/>
            <person name="Eisen J.A."/>
            <person name="Carpenter L."/>
            <person name="White O."/>
            <person name="Peterson J.D."/>
            <person name="DeBoy R.T."/>
            <person name="Dodson R.J."/>
            <person name="Gwinn M.L."/>
            <person name="Haft D.H."/>
            <person name="Hickey E.K."/>
            <person name="Kolonay J.F."/>
            <person name="Nelson W.C."/>
            <person name="Umayam L.A."/>
            <person name="Ermolaeva M.D."/>
            <person name="Salzberg S.L."/>
            <person name="Delcher A."/>
            <person name="Utterback T.R."/>
            <person name="Weidman J.F."/>
            <person name="Khouri H.M."/>
            <person name="Gill J."/>
            <person name="Mikula A."/>
            <person name="Bishai W."/>
            <person name="Jacobs W.R. Jr."/>
            <person name="Venter J.C."/>
            <person name="Fraser C.M."/>
        </authorList>
    </citation>
    <scope>NUCLEOTIDE SEQUENCE [LARGE SCALE GENOMIC DNA]</scope>
    <source>
        <strain>CDC 1551 / Oshkosh</strain>
    </source>
</reference>
<evidence type="ECO:0000250" key="1"/>
<keyword id="KW-1017">Isopeptide bond</keyword>
<keyword id="KW-1185">Reference proteome</keyword>
<keyword id="KW-0832">Ubl conjugation</keyword>
<dbReference type="EMBL" id="AE000516">
    <property type="protein sequence ID" value="AAK44770.1"/>
    <property type="molecule type" value="Genomic_DNA"/>
</dbReference>
<dbReference type="RefSeq" id="WP_010924260.1">
    <property type="nucleotide sequence ID" value="NC_002755.2"/>
</dbReference>
<dbReference type="KEGG" id="mtc:MT0547"/>
<dbReference type="HOGENOM" id="CLU_033323_5_1_11"/>
<dbReference type="Proteomes" id="UP000001020">
    <property type="component" value="Chromosome"/>
</dbReference>
<dbReference type="GO" id="GO:0005737">
    <property type="term" value="C:cytoplasm"/>
    <property type="evidence" value="ECO:0007669"/>
    <property type="project" value="TreeGrafter"/>
</dbReference>
<dbReference type="GO" id="GO:0016791">
    <property type="term" value="F:phosphatase activity"/>
    <property type="evidence" value="ECO:0007669"/>
    <property type="project" value="TreeGrafter"/>
</dbReference>
<dbReference type="FunFam" id="3.40.50.1240:FF:000072">
    <property type="entry name" value="Histidine phosphatase family protein"/>
    <property type="match status" value="1"/>
</dbReference>
<dbReference type="Gene3D" id="3.40.50.1240">
    <property type="entry name" value="Phosphoglycerate mutase-like"/>
    <property type="match status" value="1"/>
</dbReference>
<dbReference type="InterPro" id="IPR013078">
    <property type="entry name" value="His_Pase_superF_clade-1"/>
</dbReference>
<dbReference type="InterPro" id="IPR029033">
    <property type="entry name" value="His_PPase_superfam"/>
</dbReference>
<dbReference type="InterPro" id="IPR050275">
    <property type="entry name" value="PGM_Phosphatase"/>
</dbReference>
<dbReference type="PANTHER" id="PTHR48100">
    <property type="entry name" value="BROAD-SPECIFICITY PHOSPHATASE YOR283W-RELATED"/>
    <property type="match status" value="1"/>
</dbReference>
<dbReference type="PANTHER" id="PTHR48100:SF51">
    <property type="entry name" value="PHOSPHOGLYCERATE MUTASE"/>
    <property type="match status" value="1"/>
</dbReference>
<dbReference type="Pfam" id="PF00300">
    <property type="entry name" value="His_Phos_1"/>
    <property type="match status" value="1"/>
</dbReference>
<dbReference type="SMART" id="SM00855">
    <property type="entry name" value="PGAM"/>
    <property type="match status" value="1"/>
</dbReference>
<dbReference type="SUPFAM" id="SSF53254">
    <property type="entry name" value="Phosphoglycerate mutase-like"/>
    <property type="match status" value="1"/>
</dbReference>
<name>Y547_MYCTO</name>
<proteinExistence type="inferred from homology"/>
<organism>
    <name type="scientific">Mycobacterium tuberculosis (strain CDC 1551 / Oshkosh)</name>
    <dbReference type="NCBI Taxonomy" id="83331"/>
    <lineage>
        <taxon>Bacteria</taxon>
        <taxon>Bacillati</taxon>
        <taxon>Actinomycetota</taxon>
        <taxon>Actinomycetes</taxon>
        <taxon>Mycobacteriales</taxon>
        <taxon>Mycobacteriaceae</taxon>
        <taxon>Mycobacterium</taxon>
        <taxon>Mycobacterium tuberculosis complex</taxon>
    </lineage>
</organism>
<accession>Q8VKK0</accession>
<sequence>MPEETQVHVVRHGEVHNPTGILYGRLPGFHLSATGAAQAAAVADALADRDIVAVIASPLQRAQETAAPIAARHDLAVETDPDLIESANFFXGRRVGPGDGAWRDPRVWWQLRNPFTPSWGEPYVDIAARMTTAVDKARVRGAGHEVVCVSHQLPVWTLRLYLTGKRLWHDPRRRDCALASVTSLIYDGDRLVDVVYSQPAAL</sequence>